<gene>
    <name type="ORF">ORF60</name>
</gene>
<feature type="chain" id="PRO_0000385086" description="Uncharacterized protein ORF60">
    <location>
        <begin position="1"/>
        <end position="411"/>
    </location>
</feature>
<proteinExistence type="predicted"/>
<organismHost>
    <name type="scientific">Magallana gigas</name>
    <name type="common">Pacific oyster</name>
    <name type="synonym">Crassostrea gigas</name>
    <dbReference type="NCBI Taxonomy" id="29159"/>
</organismHost>
<organismHost>
    <name type="scientific">Pecten maximus</name>
    <name type="common">King scallop</name>
    <name type="synonym">Pilgrim's clam</name>
    <dbReference type="NCBI Taxonomy" id="6579"/>
</organismHost>
<accession>Q6R7G5</accession>
<protein>
    <recommendedName>
        <fullName>Uncharacterized protein ORF60</fullName>
    </recommendedName>
</protein>
<dbReference type="EMBL" id="AY509253">
    <property type="protein sequence ID" value="AAS00950.1"/>
    <property type="molecule type" value="Genomic_DNA"/>
</dbReference>
<dbReference type="RefSeq" id="YP_024603.1">
    <property type="nucleotide sequence ID" value="NC_005881.2"/>
</dbReference>
<dbReference type="KEGG" id="vg:2948176"/>
<dbReference type="Proteomes" id="UP000007021">
    <property type="component" value="Segment"/>
</dbReference>
<reference key="1">
    <citation type="journal article" date="2005" name="J. Gen. Virol.">
        <title>A novel class of herpesvirus with bivalve hosts.</title>
        <authorList>
            <person name="Davison A.J."/>
            <person name="Trus B.L."/>
            <person name="Cheng N."/>
            <person name="Steven A.C."/>
            <person name="Watson M.S."/>
            <person name="Cunningham C."/>
            <person name="Le Deuff R.M."/>
            <person name="Renault T."/>
        </authorList>
    </citation>
    <scope>NUCLEOTIDE SEQUENCE [LARGE SCALE GENOMIC DNA]</scope>
</reference>
<organism>
    <name type="scientific">Ostreid herpesvirus 1 (isolate France)</name>
    <name type="common">OsHV-1</name>
    <name type="synonym">Pacific oyster herpesvirus</name>
    <dbReference type="NCBI Taxonomy" id="654903"/>
    <lineage>
        <taxon>Viruses</taxon>
        <taxon>Duplodnaviria</taxon>
        <taxon>Heunggongvirae</taxon>
        <taxon>Peploviricota</taxon>
        <taxon>Herviviricetes</taxon>
        <taxon>Herpesvirales</taxon>
        <taxon>Malacoherpesviridae</taxon>
        <taxon>Ostreavirus</taxon>
        <taxon>Ostreavirus ostreidmalaco1</taxon>
        <taxon>Ostreid herpesvirus 1</taxon>
    </lineage>
</organism>
<keyword id="KW-1185">Reference proteome</keyword>
<sequence>MAEYLILYLNNKGKLTNHERYEISEHDGVISNIDIDEDDKLDTLLTEIKNKNVLSTKETGSDFVGHIVIENGNRPVRGVNIEEYKIRASTDEEFDIPYNIYKPENYSLLKKLRKLLGKPDPPPLVNMLKQDRILTGWKKKIFKSYKPSYKQFITSKCTIHTTGYLYNIGDLDLFTRDILRVVVDDDIFNHWLLTEGIIDKMDFVCHYLKCVLEEGGFMCDHCGDKFIIIKNQKSKELFDKITAKMNHVNYVRELSTDLPLTKYNISKSLTITKCPYSCSYLFNNGVELSQKLKTMIMDMINLQTPDSLLERLGEVLTVSGTDGRERNEILSAIWKGLYEGEPFLPCMIGMKDYQDISIKDMRIPVFLKPSPYSTRVVVEPKVCFLPWQIVFQMMFSQDVLEYSSMLYFADS</sequence>
<name>Y060_OSHVF</name>